<evidence type="ECO:0000250" key="1">
    <source>
        <dbReference type="UniProtKB" id="P14921"/>
    </source>
</evidence>
<evidence type="ECO:0000250" key="2">
    <source>
        <dbReference type="UniProtKB" id="P27577"/>
    </source>
</evidence>
<evidence type="ECO:0000255" key="3">
    <source>
        <dbReference type="PROSITE-ProRule" id="PRU00237"/>
    </source>
</evidence>
<evidence type="ECO:0000255" key="4">
    <source>
        <dbReference type="PROSITE-ProRule" id="PRU00762"/>
    </source>
</evidence>
<evidence type="ECO:0000305" key="5"/>
<name>ETS1A_XENLA</name>
<accession>P18755</accession>
<dbReference type="EMBL" id="X52692">
    <property type="protein sequence ID" value="CAA36919.1"/>
    <property type="molecule type" value="mRNA"/>
</dbReference>
<dbReference type="PIR" id="S11225">
    <property type="entry name" value="S11225"/>
</dbReference>
<dbReference type="SMR" id="P18755"/>
<dbReference type="AGR" id="Xenbase:XB-GENE-6254436"/>
<dbReference type="Xenbase" id="XB-GENE-6254436">
    <property type="gene designation" value="ets1.S"/>
</dbReference>
<dbReference type="Proteomes" id="UP000186698">
    <property type="component" value="Unplaced"/>
</dbReference>
<dbReference type="GO" id="GO:0005737">
    <property type="term" value="C:cytoplasm"/>
    <property type="evidence" value="ECO:0007669"/>
    <property type="project" value="UniProtKB-SubCell"/>
</dbReference>
<dbReference type="GO" id="GO:0005634">
    <property type="term" value="C:nucleus"/>
    <property type="evidence" value="ECO:0000250"/>
    <property type="project" value="UniProtKB"/>
</dbReference>
<dbReference type="GO" id="GO:0003677">
    <property type="term" value="F:DNA binding"/>
    <property type="evidence" value="ECO:0000250"/>
    <property type="project" value="UniProtKB"/>
</dbReference>
<dbReference type="GO" id="GO:0003700">
    <property type="term" value="F:DNA-binding transcription factor activity"/>
    <property type="evidence" value="ECO:0000250"/>
    <property type="project" value="UniProtKB"/>
</dbReference>
<dbReference type="GO" id="GO:0000981">
    <property type="term" value="F:DNA-binding transcription factor activity, RNA polymerase II-specific"/>
    <property type="evidence" value="ECO:0000318"/>
    <property type="project" value="GO_Central"/>
</dbReference>
<dbReference type="GO" id="GO:0043565">
    <property type="term" value="F:sequence-specific DNA binding"/>
    <property type="evidence" value="ECO:0007669"/>
    <property type="project" value="InterPro"/>
</dbReference>
<dbReference type="GO" id="GO:0030154">
    <property type="term" value="P:cell differentiation"/>
    <property type="evidence" value="ECO:0000318"/>
    <property type="project" value="GO_Central"/>
</dbReference>
<dbReference type="GO" id="GO:0045893">
    <property type="term" value="P:positive regulation of DNA-templated transcription"/>
    <property type="evidence" value="ECO:0000250"/>
    <property type="project" value="UniProtKB"/>
</dbReference>
<dbReference type="GO" id="GO:0010595">
    <property type="term" value="P:positive regulation of endothelial cell migration"/>
    <property type="evidence" value="ECO:0000250"/>
    <property type="project" value="UniProtKB"/>
</dbReference>
<dbReference type="GO" id="GO:0045648">
    <property type="term" value="P:positive regulation of erythrocyte differentiation"/>
    <property type="evidence" value="ECO:0000250"/>
    <property type="project" value="UniProtKB"/>
</dbReference>
<dbReference type="GO" id="GO:0045765">
    <property type="term" value="P:regulation of angiogenesis"/>
    <property type="evidence" value="ECO:0000250"/>
    <property type="project" value="UniProtKB"/>
</dbReference>
<dbReference type="GO" id="GO:0006357">
    <property type="term" value="P:regulation of transcription by RNA polymerase II"/>
    <property type="evidence" value="ECO:0000318"/>
    <property type="project" value="GO_Central"/>
</dbReference>
<dbReference type="CDD" id="cd08542">
    <property type="entry name" value="SAM_PNT-ETS-1"/>
    <property type="match status" value="1"/>
</dbReference>
<dbReference type="FunFam" id="1.10.10.10:FF:000097">
    <property type="entry name" value="Protein c-ets-1 isoform 1"/>
    <property type="match status" value="1"/>
</dbReference>
<dbReference type="FunFam" id="1.10.150.50:FF:000014">
    <property type="entry name" value="Protein c-ets-1 isoform 1"/>
    <property type="match status" value="1"/>
</dbReference>
<dbReference type="Gene3D" id="1.10.150.50">
    <property type="entry name" value="Transcription Factor, Ets-1"/>
    <property type="match status" value="1"/>
</dbReference>
<dbReference type="Gene3D" id="1.10.10.10">
    <property type="entry name" value="Winged helix-like DNA-binding domain superfamily/Winged helix DNA-binding domain"/>
    <property type="match status" value="1"/>
</dbReference>
<dbReference type="InterPro" id="IPR045688">
    <property type="entry name" value="Ets1_N_flank"/>
</dbReference>
<dbReference type="InterPro" id="IPR000418">
    <property type="entry name" value="Ets_dom"/>
</dbReference>
<dbReference type="InterPro" id="IPR046328">
    <property type="entry name" value="ETS_fam"/>
</dbReference>
<dbReference type="InterPro" id="IPR003118">
    <property type="entry name" value="Pointed_dom"/>
</dbReference>
<dbReference type="InterPro" id="IPR013761">
    <property type="entry name" value="SAM/pointed_sf"/>
</dbReference>
<dbReference type="InterPro" id="IPR041886">
    <property type="entry name" value="SAM_PNT-ETS-1"/>
</dbReference>
<dbReference type="InterPro" id="IPR016311">
    <property type="entry name" value="Transform_prot_C-ets"/>
</dbReference>
<dbReference type="InterPro" id="IPR036388">
    <property type="entry name" value="WH-like_DNA-bd_sf"/>
</dbReference>
<dbReference type="InterPro" id="IPR036390">
    <property type="entry name" value="WH_DNA-bd_sf"/>
</dbReference>
<dbReference type="PANTHER" id="PTHR11849">
    <property type="entry name" value="ETS"/>
    <property type="match status" value="1"/>
</dbReference>
<dbReference type="PANTHER" id="PTHR11849:SF309">
    <property type="entry name" value="V-ETS AVIAN ERYTHROBLASTOSIS VIRUS E26 ONCO HOMOLOG 1"/>
    <property type="match status" value="1"/>
</dbReference>
<dbReference type="Pfam" id="PF00178">
    <property type="entry name" value="Ets"/>
    <property type="match status" value="1"/>
</dbReference>
<dbReference type="Pfam" id="PF19525">
    <property type="entry name" value="Ets1_N_flank"/>
    <property type="match status" value="1"/>
</dbReference>
<dbReference type="Pfam" id="PF02198">
    <property type="entry name" value="SAM_PNT"/>
    <property type="match status" value="1"/>
</dbReference>
<dbReference type="PIRSF" id="PIRSF001698">
    <property type="entry name" value="Transforming_factor_C-ets"/>
    <property type="match status" value="1"/>
</dbReference>
<dbReference type="PRINTS" id="PR00454">
    <property type="entry name" value="ETSDOMAIN"/>
</dbReference>
<dbReference type="SMART" id="SM00413">
    <property type="entry name" value="ETS"/>
    <property type="match status" value="1"/>
</dbReference>
<dbReference type="SMART" id="SM00251">
    <property type="entry name" value="SAM_PNT"/>
    <property type="match status" value="1"/>
</dbReference>
<dbReference type="SUPFAM" id="SSF47769">
    <property type="entry name" value="SAM/Pointed domain"/>
    <property type="match status" value="1"/>
</dbReference>
<dbReference type="SUPFAM" id="SSF46785">
    <property type="entry name" value="Winged helix' DNA-binding domain"/>
    <property type="match status" value="1"/>
</dbReference>
<dbReference type="PROSITE" id="PS00345">
    <property type="entry name" value="ETS_DOMAIN_1"/>
    <property type="match status" value="1"/>
</dbReference>
<dbReference type="PROSITE" id="PS00346">
    <property type="entry name" value="ETS_DOMAIN_2"/>
    <property type="match status" value="1"/>
</dbReference>
<dbReference type="PROSITE" id="PS50061">
    <property type="entry name" value="ETS_DOMAIN_3"/>
    <property type="match status" value="1"/>
</dbReference>
<dbReference type="PROSITE" id="PS51433">
    <property type="entry name" value="PNT"/>
    <property type="match status" value="1"/>
</dbReference>
<reference key="1">
    <citation type="journal article" date="1990" name="Nucleic Acids Res.">
        <title>Characterization of Xenopus laevis cDNA clones of the c-ets-1 proto-oncogene.</title>
        <authorList>
            <person name="Stiegler P."/>
            <person name="Wolff C.M."/>
            <person name="Baltzinger M."/>
            <person name="Hirzlin J."/>
            <person name="Senan F."/>
            <person name="Meyer D."/>
            <person name="Ghysdael J."/>
            <person name="Stehelin D."/>
            <person name="Befort N."/>
            <person name="Remy P."/>
        </authorList>
    </citation>
    <scope>NUCLEOTIDE SEQUENCE [MRNA]</scope>
    <source>
        <tissue>Ovary</tissue>
    </source>
</reference>
<proteinExistence type="evidence at transcript level"/>
<keyword id="KW-0963">Cytoplasm</keyword>
<keyword id="KW-0238">DNA-binding</keyword>
<keyword id="KW-0539">Nucleus</keyword>
<keyword id="KW-0597">Phosphoprotein</keyword>
<keyword id="KW-1185">Reference proteome</keyword>
<keyword id="KW-0804">Transcription</keyword>
<keyword id="KW-0805">Transcription regulation</keyword>
<protein>
    <recommendedName>
        <fullName>Protein c-ets-1-A</fullName>
        <shortName>C-ets-1A</shortName>
    </recommendedName>
</protein>
<gene>
    <name type="primary">ets1-a</name>
</gene>
<comment type="function">
    <text evidence="1">Transcription factor. Directly controls the expression of cytokine and chemokine genes in a wide variety of different cellular contexts.</text>
</comment>
<comment type="activity regulation">
    <text evidence="2">Autoinhibited by a module composed of four alpha helices (HI-1, HI-2, H4, and H5) that flank the DNA-binding ETS domain, reducing the affinity for DNA.</text>
</comment>
<comment type="subunit">
    <text evidence="1">Binds DNA as a homodimer; homodimerization is required for transcription activation.</text>
</comment>
<comment type="subcellular location">
    <subcellularLocation>
        <location evidence="1">Nucleus</location>
    </subcellularLocation>
    <subcellularLocation>
        <location evidence="1">Cytoplasm</location>
    </subcellularLocation>
</comment>
<comment type="similarity">
    <text evidence="5">Belongs to the ETS family.</text>
</comment>
<organism>
    <name type="scientific">Xenopus laevis</name>
    <name type="common">African clawed frog</name>
    <dbReference type="NCBI Taxonomy" id="8355"/>
    <lineage>
        <taxon>Eukaryota</taxon>
        <taxon>Metazoa</taxon>
        <taxon>Chordata</taxon>
        <taxon>Craniata</taxon>
        <taxon>Vertebrata</taxon>
        <taxon>Euteleostomi</taxon>
        <taxon>Amphibia</taxon>
        <taxon>Batrachia</taxon>
        <taxon>Anura</taxon>
        <taxon>Pipoidea</taxon>
        <taxon>Pipidae</taxon>
        <taxon>Xenopodinae</taxon>
        <taxon>Xenopus</taxon>
        <taxon>Xenopus</taxon>
    </lineage>
</organism>
<feature type="chain" id="PRO_0000204074" description="Protein c-ets-1-A">
    <location>
        <begin position="1"/>
        <end position="438"/>
    </location>
</feature>
<feature type="domain" description="PNT" evidence="4">
    <location>
        <begin position="49"/>
        <end position="134"/>
    </location>
</feature>
<feature type="DNA-binding region" description="ETS" evidence="3">
    <location>
        <begin position="332"/>
        <end position="412"/>
    </location>
</feature>
<feature type="region of interest" description="Activation domain; required for transcription activation" evidence="1">
    <location>
        <begin position="128"/>
        <end position="240"/>
    </location>
</feature>
<feature type="region of interest" description="Helix HI-1" evidence="2">
    <location>
        <begin position="301"/>
        <end position="309"/>
    </location>
</feature>
<feature type="region of interest" description="Helix HI-2" evidence="2">
    <location>
        <begin position="320"/>
        <end position="327"/>
    </location>
</feature>
<feature type="region of interest" description="Helix H4" evidence="2">
    <location>
        <begin position="415"/>
        <end position="419"/>
    </location>
</feature>
<feature type="region of interest" description="Helix H5" evidence="2">
    <location>
        <begin position="423"/>
        <end position="429"/>
    </location>
</feature>
<sequence>MKAALDLKPTLSIKTEKEYEAYSCSDMECADVPLLTPSSKEMMSQALRATFSRFTKEQQRLGIPIDPREWTDMHVREWVSWAVNEFTLKGVDFQKFCMSGAALCALGKECFLELAPDFVGDILWEHLEILQKDSKQYQTSEITPAYPESRYTSDYFISYGIEHAQCVPPSEFSEPSFITESYQTLHPISSEELLSLKYENDYPLGLLRDPLQPESLQGDYFTIKQEVVTPDNMCLGRISRGKLGGQESFESIESHDSCDRLTQSWSSQSSYNSLQRVPSYDSFDSEDYPPAMPSHKSKGTFKDYVRDRAELNKDKPVIPAAALAGYTGSGPIQLWQFLLELLTDKSCQSFISWTGDGWEFKLSDPDEVARRWGKRKNKPKMNYEKLSRGLRYYYDKNIIHKTAGKRYVYRFVCDLQSLLGYVPEELHAMLDVKPDTDE</sequence>